<comment type="function">
    <text evidence="1">Sequence-specific transcription factor which is part of a developmental regulatory system that provides cells with specific positional identities on the anterior-posterior axis.</text>
</comment>
<comment type="subcellular location">
    <subcellularLocation>
        <location evidence="2">Nucleus</location>
    </subcellularLocation>
</comment>
<comment type="similarity">
    <text evidence="3">Belongs to the Antp homeobox family. Labial subfamily.</text>
</comment>
<protein>
    <recommendedName>
        <fullName>Homeobox protein Hox-D1</fullName>
    </recommendedName>
    <alternativeName>
        <fullName>Homeobox protein CHOX-1</fullName>
    </alternativeName>
</protein>
<proteinExistence type="inferred from homology"/>
<dbReference type="EMBL" id="M23611">
    <property type="protein sequence ID" value="AAA48820.1"/>
    <property type="molecule type" value="Genomic_DNA"/>
</dbReference>
<dbReference type="PIR" id="JU0068">
    <property type="entry name" value="JU0068"/>
</dbReference>
<dbReference type="SMR" id="P13544"/>
<dbReference type="FunCoup" id="P13544">
    <property type="interactions" value="312"/>
</dbReference>
<dbReference type="VEuPathDB" id="HostDB:geneid_101750316"/>
<dbReference type="InParanoid" id="P13544"/>
<dbReference type="OrthoDB" id="6159439at2759"/>
<dbReference type="PhylomeDB" id="P13544"/>
<dbReference type="Proteomes" id="UP000000539">
    <property type="component" value="Unassembled WGS sequence"/>
</dbReference>
<dbReference type="GO" id="GO:0005634">
    <property type="term" value="C:nucleus"/>
    <property type="evidence" value="ECO:0007669"/>
    <property type="project" value="UniProtKB-SubCell"/>
</dbReference>
<dbReference type="GO" id="GO:0000981">
    <property type="term" value="F:DNA-binding transcription factor activity, RNA polymerase II-specific"/>
    <property type="evidence" value="ECO:0007669"/>
    <property type="project" value="InterPro"/>
</dbReference>
<dbReference type="GO" id="GO:0043565">
    <property type="term" value="F:sequence-specific DNA binding"/>
    <property type="evidence" value="ECO:0007669"/>
    <property type="project" value="InterPro"/>
</dbReference>
<dbReference type="CDD" id="cd00086">
    <property type="entry name" value="homeodomain"/>
    <property type="match status" value="1"/>
</dbReference>
<dbReference type="Gene3D" id="1.10.10.60">
    <property type="entry name" value="Homeodomain-like"/>
    <property type="match status" value="1"/>
</dbReference>
<dbReference type="InterPro" id="IPR001356">
    <property type="entry name" value="HD"/>
</dbReference>
<dbReference type="InterPro" id="IPR020479">
    <property type="entry name" value="HD_metazoa"/>
</dbReference>
<dbReference type="InterPro" id="IPR017970">
    <property type="entry name" value="Homeobox_CS"/>
</dbReference>
<dbReference type="InterPro" id="IPR009057">
    <property type="entry name" value="Homeodomain-like_sf"/>
</dbReference>
<dbReference type="InterPro" id="IPR046327">
    <property type="entry name" value="HXA1/B1/D1"/>
</dbReference>
<dbReference type="PANTHER" id="PTHR45946:SF1">
    <property type="entry name" value="HOMEOBOX PROTEIN HOX-D1"/>
    <property type="match status" value="1"/>
</dbReference>
<dbReference type="PANTHER" id="PTHR45946">
    <property type="entry name" value="HOMEOBOX PROTEIN ROUGH-RELATED"/>
    <property type="match status" value="1"/>
</dbReference>
<dbReference type="Pfam" id="PF00046">
    <property type="entry name" value="Homeodomain"/>
    <property type="match status" value="1"/>
</dbReference>
<dbReference type="PRINTS" id="PR00024">
    <property type="entry name" value="HOMEOBOX"/>
</dbReference>
<dbReference type="SMART" id="SM00389">
    <property type="entry name" value="HOX"/>
    <property type="match status" value="1"/>
</dbReference>
<dbReference type="SUPFAM" id="SSF46689">
    <property type="entry name" value="Homeodomain-like"/>
    <property type="match status" value="1"/>
</dbReference>
<dbReference type="PROSITE" id="PS00027">
    <property type="entry name" value="HOMEOBOX_1"/>
    <property type="match status" value="1"/>
</dbReference>
<dbReference type="PROSITE" id="PS50071">
    <property type="entry name" value="HOMEOBOX_2"/>
    <property type="match status" value="1"/>
</dbReference>
<keyword id="KW-0217">Developmental protein</keyword>
<keyword id="KW-0238">DNA-binding</keyword>
<keyword id="KW-0371">Homeobox</keyword>
<keyword id="KW-0539">Nucleus</keyword>
<keyword id="KW-1185">Reference proteome</keyword>
<keyword id="KW-0804">Transcription</keyword>
<keyword id="KW-0805">Transcription regulation</keyword>
<evidence type="ECO:0000250" key="1"/>
<evidence type="ECO:0000255" key="2">
    <source>
        <dbReference type="PROSITE-ProRule" id="PRU00108"/>
    </source>
</evidence>
<evidence type="ECO:0000305" key="3"/>
<gene>
    <name type="primary">HOXD1</name>
    <name type="synonym">CHOX-1</name>
</gene>
<sequence length="67" mass="8411">AFSLRTSFSTRQLTELEKEFHFSRYLSRARRLEVARSLRLRDAQVKVWFQNRRMKQKKRERERWPDP</sequence>
<organism>
    <name type="scientific">Gallus gallus</name>
    <name type="common">Chicken</name>
    <dbReference type="NCBI Taxonomy" id="9031"/>
    <lineage>
        <taxon>Eukaryota</taxon>
        <taxon>Metazoa</taxon>
        <taxon>Chordata</taxon>
        <taxon>Craniata</taxon>
        <taxon>Vertebrata</taxon>
        <taxon>Euteleostomi</taxon>
        <taxon>Archelosauria</taxon>
        <taxon>Archosauria</taxon>
        <taxon>Dinosauria</taxon>
        <taxon>Saurischia</taxon>
        <taxon>Theropoda</taxon>
        <taxon>Coelurosauria</taxon>
        <taxon>Aves</taxon>
        <taxon>Neognathae</taxon>
        <taxon>Galloanserae</taxon>
        <taxon>Galliformes</taxon>
        <taxon>Phasianidae</taxon>
        <taxon>Phasianinae</taxon>
        <taxon>Gallus</taxon>
    </lineage>
</organism>
<feature type="chain" id="PRO_0000049005" description="Homeobox protein Hox-D1">
    <location>
        <begin position="1" status="less than"/>
        <end position="67"/>
    </location>
</feature>
<feature type="DNA-binding region" description="Homeobox" evidence="2">
    <location>
        <begin position="1"/>
        <end position="60"/>
    </location>
</feature>
<feature type="non-terminal residue">
    <location>
        <position position="1"/>
    </location>
</feature>
<reference key="1">
    <citation type="journal article" date="1989" name="Gene">
        <title>The chicken homeo box genes CHox1 and CHox3: cloning, sequencing and expression during embryogenesis.</title>
        <authorList>
            <person name="Rangini Z."/>
            <person name="Frumkin A."/>
            <person name="Shani G."/>
            <person name="Guttmann M."/>
            <person name="Eyal-Giladi H."/>
            <person name="Gruenbaum Y."/>
            <person name="Fainsod A."/>
        </authorList>
    </citation>
    <scope>NUCLEOTIDE SEQUENCE [GENOMIC DNA]</scope>
</reference>
<name>HXD1_CHICK</name>
<accession>P13544</accession>